<comment type="function">
    <text evidence="4">Esterifies acyl-group from acyl-ACP to the sn-2 position of glycerol-3-phosphate, a step in cutin biosynthesis.</text>
</comment>
<comment type="catalytic activity">
    <reaction evidence="3 4">
        <text>sn-glycerol 3-phosphate + an acyl-CoA = a 2-acyl-sn-glycerol 3-phosphate + CoA</text>
        <dbReference type="Rhea" id="RHEA:33559"/>
        <dbReference type="ChEBI" id="CHEBI:57287"/>
        <dbReference type="ChEBI" id="CHEBI:57597"/>
        <dbReference type="ChEBI" id="CHEBI:58342"/>
        <dbReference type="ChEBI" id="CHEBI:64982"/>
        <dbReference type="EC" id="2.3.1.198"/>
    </reaction>
</comment>
<comment type="biophysicochemical properties">
    <kinetics>
        <Vmax evidence="3">58.92 pmol/min/mg enzyme</Vmax>
    </kinetics>
</comment>
<comment type="subcellular location">
    <subcellularLocation>
        <location evidence="5">Membrane</location>
        <topology evidence="5">Multi-pass membrane protein</topology>
    </subcellularLocation>
</comment>
<comment type="tissue specificity">
    <text evidence="3">Widely expressed at high level. Highly expressed in seedlings, developing seedlings and flower buds.</text>
</comment>
<comment type="domain">
    <text evidence="1">The HXXXXD motif is essential for acyltransferase activity and may constitute the binding site for the phosphate moiety of the glycerol-3-phosphate.</text>
</comment>
<comment type="similarity">
    <text evidence="5">Belongs to the GPAT/DAPAT family.</text>
</comment>
<feature type="chain" id="PRO_0000195252" description="Glycerol-3-phosphate 2-O-acyltransferase 4">
    <location>
        <begin position="1"/>
        <end position="503"/>
    </location>
</feature>
<feature type="transmembrane region" description="Helical" evidence="2">
    <location>
        <begin position="42"/>
        <end position="62"/>
    </location>
</feature>
<feature type="transmembrane region" description="Helical" evidence="2">
    <location>
        <begin position="64"/>
        <end position="84"/>
    </location>
</feature>
<feature type="transmembrane region" description="Helical" evidence="2">
    <location>
        <begin position="244"/>
        <end position="264"/>
    </location>
</feature>
<feature type="short sequence motif" description="HXXXXD motif">
    <location>
        <begin position="311"/>
        <end position="316"/>
    </location>
</feature>
<feature type="sequence conflict" description="In Ref. 3; AAL32544/AAM13293." evidence="5" ref="3">
    <original>M</original>
    <variation>K</variation>
    <location>
        <position position="205"/>
    </location>
</feature>
<dbReference type="EC" id="2.3.1.198"/>
<dbReference type="EMBL" id="AC061957">
    <property type="protein sequence ID" value="AAF81319.1"/>
    <property type="molecule type" value="Genomic_DNA"/>
</dbReference>
<dbReference type="EMBL" id="CP002684">
    <property type="protein sequence ID" value="AEE27311.1"/>
    <property type="molecule type" value="Genomic_DNA"/>
</dbReference>
<dbReference type="EMBL" id="AY062466">
    <property type="protein sequence ID" value="AAL32544.1"/>
    <property type="molecule type" value="mRNA"/>
</dbReference>
<dbReference type="EMBL" id="AY093294">
    <property type="protein sequence ID" value="AAM13293.1"/>
    <property type="molecule type" value="mRNA"/>
</dbReference>
<dbReference type="PIR" id="H86146">
    <property type="entry name" value="H86146"/>
</dbReference>
<dbReference type="RefSeq" id="NP_171667.1">
    <property type="nucleotide sequence ID" value="NM_100043.5"/>
</dbReference>
<dbReference type="SMR" id="Q9LMM0"/>
<dbReference type="BioGRID" id="24532">
    <property type="interactions" value="3"/>
</dbReference>
<dbReference type="FunCoup" id="Q9LMM0">
    <property type="interactions" value="26"/>
</dbReference>
<dbReference type="IntAct" id="Q9LMM0">
    <property type="interactions" value="1"/>
</dbReference>
<dbReference type="STRING" id="3702.Q9LMM0"/>
<dbReference type="iPTMnet" id="Q9LMM0"/>
<dbReference type="PaxDb" id="3702-AT1G01610.1"/>
<dbReference type="ProteomicsDB" id="248504"/>
<dbReference type="EnsemblPlants" id="AT1G01610.1">
    <property type="protein sequence ID" value="AT1G01610.1"/>
    <property type="gene ID" value="AT1G01610"/>
</dbReference>
<dbReference type="GeneID" id="839297"/>
<dbReference type="Gramene" id="AT1G01610.1">
    <property type="protein sequence ID" value="AT1G01610.1"/>
    <property type="gene ID" value="AT1G01610"/>
</dbReference>
<dbReference type="KEGG" id="ath:AT1G01610"/>
<dbReference type="Araport" id="AT1G01610"/>
<dbReference type="TAIR" id="AT1G01610">
    <property type="gene designation" value="GPAT4"/>
</dbReference>
<dbReference type="eggNOG" id="ENOG502RK50">
    <property type="taxonomic scope" value="Eukaryota"/>
</dbReference>
<dbReference type="HOGENOM" id="CLU_028504_1_0_1"/>
<dbReference type="InParanoid" id="Q9LMM0"/>
<dbReference type="OMA" id="GYMVHET"/>
<dbReference type="OrthoDB" id="1854593at2759"/>
<dbReference type="PhylomeDB" id="Q9LMM0"/>
<dbReference type="BRENDA" id="2.3.1.198">
    <property type="organism ID" value="399"/>
</dbReference>
<dbReference type="BRENDA" id="3.1.3.B13">
    <property type="organism ID" value="399"/>
</dbReference>
<dbReference type="PRO" id="PR:Q9LMM0"/>
<dbReference type="Proteomes" id="UP000006548">
    <property type="component" value="Chromosome 1"/>
</dbReference>
<dbReference type="ExpressionAtlas" id="Q9LMM0">
    <property type="expression patterns" value="baseline and differential"/>
</dbReference>
<dbReference type="GO" id="GO:0016020">
    <property type="term" value="C:membrane"/>
    <property type="evidence" value="ECO:0007669"/>
    <property type="project" value="UniProtKB-SubCell"/>
</dbReference>
<dbReference type="GO" id="GO:0090447">
    <property type="term" value="F:glycerol-3-phosphate 2-O-acyltransferase activity"/>
    <property type="evidence" value="ECO:0000314"/>
    <property type="project" value="TAIR"/>
</dbReference>
<dbReference type="GO" id="GO:0016791">
    <property type="term" value="F:phosphatase activity"/>
    <property type="evidence" value="ECO:0000314"/>
    <property type="project" value="TAIR"/>
</dbReference>
<dbReference type="GO" id="GO:0010143">
    <property type="term" value="P:cutin biosynthetic process"/>
    <property type="evidence" value="ECO:0000315"/>
    <property type="project" value="TAIR"/>
</dbReference>
<dbReference type="GO" id="GO:0008654">
    <property type="term" value="P:phospholipid biosynthetic process"/>
    <property type="evidence" value="ECO:0007669"/>
    <property type="project" value="UniProtKB-KW"/>
</dbReference>
<dbReference type="CDD" id="cd06551">
    <property type="entry name" value="LPLAT"/>
    <property type="match status" value="1"/>
</dbReference>
<dbReference type="FunFam" id="3.40.50.1000:FF:000134">
    <property type="entry name" value="Glycerol-3-phosphate 2-O-acyltransferase 6"/>
    <property type="match status" value="1"/>
</dbReference>
<dbReference type="Gene3D" id="3.40.50.1000">
    <property type="entry name" value="HAD superfamily/HAD-like"/>
    <property type="match status" value="1"/>
</dbReference>
<dbReference type="InterPro" id="IPR056462">
    <property type="entry name" value="HAD_RAM2/GPAT1-8"/>
</dbReference>
<dbReference type="InterPro" id="IPR023214">
    <property type="entry name" value="HAD_sf"/>
</dbReference>
<dbReference type="InterPro" id="IPR002123">
    <property type="entry name" value="Plipid/glycerol_acylTrfase"/>
</dbReference>
<dbReference type="PANTHER" id="PTHR15486">
    <property type="entry name" value="ANCIENT UBIQUITOUS PROTEIN"/>
    <property type="match status" value="1"/>
</dbReference>
<dbReference type="PANTHER" id="PTHR15486:SF61">
    <property type="entry name" value="GLYCEROL-3-PHOSPHATE 2-O-ACYLTRANSFERASE 4"/>
    <property type="match status" value="1"/>
</dbReference>
<dbReference type="Pfam" id="PF01553">
    <property type="entry name" value="Acyltransferase"/>
    <property type="match status" value="1"/>
</dbReference>
<dbReference type="Pfam" id="PF23270">
    <property type="entry name" value="HAD_RAM2_N"/>
    <property type="match status" value="1"/>
</dbReference>
<dbReference type="SMART" id="SM00563">
    <property type="entry name" value="PlsC"/>
    <property type="match status" value="1"/>
</dbReference>
<dbReference type="SUPFAM" id="SSF69593">
    <property type="entry name" value="Glycerol-3-phosphate (1)-acyltransferase"/>
    <property type="match status" value="1"/>
</dbReference>
<keyword id="KW-0012">Acyltransferase</keyword>
<keyword id="KW-0444">Lipid biosynthesis</keyword>
<keyword id="KW-0443">Lipid metabolism</keyword>
<keyword id="KW-0472">Membrane</keyword>
<keyword id="KW-0594">Phospholipid biosynthesis</keyword>
<keyword id="KW-1208">Phospholipid metabolism</keyword>
<keyword id="KW-1185">Reference proteome</keyword>
<keyword id="KW-0808">Transferase</keyword>
<keyword id="KW-0812">Transmembrane</keyword>
<keyword id="KW-1133">Transmembrane helix</keyword>
<gene>
    <name type="primary">GPAT4</name>
    <name type="ordered locus">At1g01610</name>
    <name type="ORF">F22L4.15</name>
</gene>
<accession>Q9LMM0</accession>
<accession>Q8W4N0</accession>
<organism>
    <name type="scientific">Arabidopsis thaliana</name>
    <name type="common">Mouse-ear cress</name>
    <dbReference type="NCBI Taxonomy" id="3702"/>
    <lineage>
        <taxon>Eukaryota</taxon>
        <taxon>Viridiplantae</taxon>
        <taxon>Streptophyta</taxon>
        <taxon>Embryophyta</taxon>
        <taxon>Tracheophyta</taxon>
        <taxon>Spermatophyta</taxon>
        <taxon>Magnoliopsida</taxon>
        <taxon>eudicotyledons</taxon>
        <taxon>Gunneridae</taxon>
        <taxon>Pentapetalae</taxon>
        <taxon>rosids</taxon>
        <taxon>malvids</taxon>
        <taxon>Brassicales</taxon>
        <taxon>Brassicaceae</taxon>
        <taxon>Camelineae</taxon>
        <taxon>Arabidopsis</taxon>
    </lineage>
</organism>
<name>GPAT4_ARATH</name>
<evidence type="ECO:0000250" key="1"/>
<evidence type="ECO:0000255" key="2"/>
<evidence type="ECO:0000269" key="3">
    <source>
    </source>
</evidence>
<evidence type="ECO:0000269" key="4">
    <source>
    </source>
</evidence>
<evidence type="ECO:0000305" key="5"/>
<proteinExistence type="evidence at protein level"/>
<reference key="1">
    <citation type="journal article" date="2000" name="Nature">
        <title>Sequence and analysis of chromosome 1 of the plant Arabidopsis thaliana.</title>
        <authorList>
            <person name="Theologis A."/>
            <person name="Ecker J.R."/>
            <person name="Palm C.J."/>
            <person name="Federspiel N.A."/>
            <person name="Kaul S."/>
            <person name="White O."/>
            <person name="Alonso J."/>
            <person name="Altafi H."/>
            <person name="Araujo R."/>
            <person name="Bowman C.L."/>
            <person name="Brooks S.Y."/>
            <person name="Buehler E."/>
            <person name="Chan A."/>
            <person name="Chao Q."/>
            <person name="Chen H."/>
            <person name="Cheuk R.F."/>
            <person name="Chin C.W."/>
            <person name="Chung M.K."/>
            <person name="Conn L."/>
            <person name="Conway A.B."/>
            <person name="Conway A.R."/>
            <person name="Creasy T.H."/>
            <person name="Dewar K."/>
            <person name="Dunn P."/>
            <person name="Etgu P."/>
            <person name="Feldblyum T.V."/>
            <person name="Feng J.-D."/>
            <person name="Fong B."/>
            <person name="Fujii C.Y."/>
            <person name="Gill J.E."/>
            <person name="Goldsmith A.D."/>
            <person name="Haas B."/>
            <person name="Hansen N.F."/>
            <person name="Hughes B."/>
            <person name="Huizar L."/>
            <person name="Hunter J.L."/>
            <person name="Jenkins J."/>
            <person name="Johnson-Hopson C."/>
            <person name="Khan S."/>
            <person name="Khaykin E."/>
            <person name="Kim C.J."/>
            <person name="Koo H.L."/>
            <person name="Kremenetskaia I."/>
            <person name="Kurtz D.B."/>
            <person name="Kwan A."/>
            <person name="Lam B."/>
            <person name="Langin-Hooper S."/>
            <person name="Lee A."/>
            <person name="Lee J.M."/>
            <person name="Lenz C.A."/>
            <person name="Li J.H."/>
            <person name="Li Y.-P."/>
            <person name="Lin X."/>
            <person name="Liu S.X."/>
            <person name="Liu Z.A."/>
            <person name="Luros J.S."/>
            <person name="Maiti R."/>
            <person name="Marziali A."/>
            <person name="Militscher J."/>
            <person name="Miranda M."/>
            <person name="Nguyen M."/>
            <person name="Nierman W.C."/>
            <person name="Osborne B.I."/>
            <person name="Pai G."/>
            <person name="Peterson J."/>
            <person name="Pham P.K."/>
            <person name="Rizzo M."/>
            <person name="Rooney T."/>
            <person name="Rowley D."/>
            <person name="Sakano H."/>
            <person name="Salzberg S.L."/>
            <person name="Schwartz J.R."/>
            <person name="Shinn P."/>
            <person name="Southwick A.M."/>
            <person name="Sun H."/>
            <person name="Tallon L.J."/>
            <person name="Tambunga G."/>
            <person name="Toriumi M.J."/>
            <person name="Town C.D."/>
            <person name="Utterback T."/>
            <person name="Van Aken S."/>
            <person name="Vaysberg M."/>
            <person name="Vysotskaia V.S."/>
            <person name="Walker M."/>
            <person name="Wu D."/>
            <person name="Yu G."/>
            <person name="Fraser C.M."/>
            <person name="Venter J.C."/>
            <person name="Davis R.W."/>
        </authorList>
    </citation>
    <scope>NUCLEOTIDE SEQUENCE [LARGE SCALE GENOMIC DNA]</scope>
    <source>
        <strain>cv. Columbia</strain>
    </source>
</reference>
<reference key="2">
    <citation type="journal article" date="2017" name="Plant J.">
        <title>Araport11: a complete reannotation of the Arabidopsis thaliana reference genome.</title>
        <authorList>
            <person name="Cheng C.Y."/>
            <person name="Krishnakumar V."/>
            <person name="Chan A.P."/>
            <person name="Thibaud-Nissen F."/>
            <person name="Schobel S."/>
            <person name="Town C.D."/>
        </authorList>
    </citation>
    <scope>GENOME REANNOTATION</scope>
    <source>
        <strain>cv. Columbia</strain>
    </source>
</reference>
<reference key="3">
    <citation type="journal article" date="2003" name="Science">
        <title>Empirical analysis of transcriptional activity in the Arabidopsis genome.</title>
        <authorList>
            <person name="Yamada K."/>
            <person name="Lim J."/>
            <person name="Dale J.M."/>
            <person name="Chen H."/>
            <person name="Shinn P."/>
            <person name="Palm C.J."/>
            <person name="Southwick A.M."/>
            <person name="Wu H.C."/>
            <person name="Kim C.J."/>
            <person name="Nguyen M."/>
            <person name="Pham P.K."/>
            <person name="Cheuk R.F."/>
            <person name="Karlin-Newmann G."/>
            <person name="Liu S.X."/>
            <person name="Lam B."/>
            <person name="Sakano H."/>
            <person name="Wu T."/>
            <person name="Yu G."/>
            <person name="Miranda M."/>
            <person name="Quach H.L."/>
            <person name="Tripp M."/>
            <person name="Chang C.H."/>
            <person name="Lee J.M."/>
            <person name="Toriumi M.J."/>
            <person name="Chan M.M."/>
            <person name="Tang C.C."/>
            <person name="Onodera C.S."/>
            <person name="Deng J.M."/>
            <person name="Akiyama K."/>
            <person name="Ansari Y."/>
            <person name="Arakawa T."/>
            <person name="Banh J."/>
            <person name="Banno F."/>
            <person name="Bowser L."/>
            <person name="Brooks S.Y."/>
            <person name="Carninci P."/>
            <person name="Chao Q."/>
            <person name="Choy N."/>
            <person name="Enju A."/>
            <person name="Goldsmith A.D."/>
            <person name="Gurjal M."/>
            <person name="Hansen N.F."/>
            <person name="Hayashizaki Y."/>
            <person name="Johnson-Hopson C."/>
            <person name="Hsuan V.W."/>
            <person name="Iida K."/>
            <person name="Karnes M."/>
            <person name="Khan S."/>
            <person name="Koesema E."/>
            <person name="Ishida J."/>
            <person name="Jiang P.X."/>
            <person name="Jones T."/>
            <person name="Kawai J."/>
            <person name="Kamiya A."/>
            <person name="Meyers C."/>
            <person name="Nakajima M."/>
            <person name="Narusaka M."/>
            <person name="Seki M."/>
            <person name="Sakurai T."/>
            <person name="Satou M."/>
            <person name="Tamse R."/>
            <person name="Vaysberg M."/>
            <person name="Wallender E.K."/>
            <person name="Wong C."/>
            <person name="Yamamura Y."/>
            <person name="Yuan S."/>
            <person name="Shinozaki K."/>
            <person name="Davis R.W."/>
            <person name="Theologis A."/>
            <person name="Ecker J.R."/>
        </authorList>
    </citation>
    <scope>NUCLEOTIDE SEQUENCE [LARGE SCALE MRNA]</scope>
    <source>
        <strain>cv. Columbia</strain>
    </source>
</reference>
<reference key="4">
    <citation type="journal article" date="2003" name="Plant Cell">
        <title>Arabidopsis AtGPAT1, a member of the membrane-bound glycerol-3-phosphate acyltransferase gene family, is essential for tapetum differentiation and male fertility.</title>
        <authorList>
            <person name="Zheng Z."/>
            <person name="Xia Q."/>
            <person name="Dauk M."/>
            <person name="Shen W."/>
            <person name="Selvaraj G."/>
            <person name="Zou J."/>
        </authorList>
    </citation>
    <scope>ENZYME ACTIVITY</scope>
    <scope>BIOPHYSICOCHEMICAL PROPERTIES</scope>
    <scope>TISSUE SPECIFICITY</scope>
</reference>
<reference key="5">
    <citation type="journal article" date="2010" name="Proc. Natl. Acad. Sci. U.S.A.">
        <title>A distinct type of glycerol-3-phosphate acyltransferase with sn-2 preference and phosphatase activity producing 2-monoacylglycerol.</title>
        <authorList>
            <person name="Yang W."/>
            <person name="Pollard M."/>
            <person name="Li-Beisson Y."/>
            <person name="Beisson F."/>
            <person name="Feig M."/>
            <person name="Ohlrogge J."/>
        </authorList>
    </citation>
    <scope>FUNCTION</scope>
    <scope>CATALYTIC ACTIVITY</scope>
</reference>
<protein>
    <recommendedName>
        <fullName>Glycerol-3-phosphate 2-O-acyltransferase 4</fullName>
        <shortName>AtGPAT4</shortName>
        <ecNumber>2.3.1.198</ecNumber>
    </recommendedName>
    <alternativeName>
        <fullName>Glycerol-3-phosphate acyltransferase 4</fullName>
    </alternativeName>
</protein>
<sequence>MSPAKKSRSFPPISECKSREYDSIAADLDGTLLLSRSSFPYFMLVAIEAGSLFRGLILLLSLPIVIIAYLFVSESLGIQILIFISFAGIKIKNIELVSRAVLTRFYAADVRKDSFEVFDKCKKRKVVVTANPIVMVEPFVKDYLGGDKVLGTEIEVNPKTMKATGFVKKPGVLVGDLKRLAILKEFGDDSPDLGLGDRTSDHDFMSICKEGYMVHETKSATTVPIESLKNRIIFHDGRLVQRPTPLNALIIYLWLPFGFMLSVFRVYFNLPLPERFVRYTYEILGIHLTIRGHRPPPPSPGKPGNLYVLNHRTALDPIIIAIALGRKITCVTYSVSRLSLMLSPIPAVALTRDRVADAARMRQLLEKGDLVICPEGTTCREPYLLRFSALFAELSDRIVPVAMNCKQGMFNGTTVRGVKFWDPYFFFMNPRPSYEATFLDRLPEEMTVNGGGKTPFEVANYVQKVIGGVLGFECTELTRKDKYLLLGGNDGKVESINKTKSME</sequence>